<feature type="chain" id="PRO_0000241268" description="Aspartyl/glutamyl-tRNA(Asn/Gln) amidotransferase subunit B">
    <location>
        <begin position="1"/>
        <end position="494"/>
    </location>
</feature>
<reference key="1">
    <citation type="submission" date="2006-01" db="EMBL/GenBank/DDBJ databases">
        <title>Complete sequence of Rhodopseudomonas palustris HaA2.</title>
        <authorList>
            <consortium name="US DOE Joint Genome Institute"/>
            <person name="Copeland A."/>
            <person name="Lucas S."/>
            <person name="Lapidus A."/>
            <person name="Barry K."/>
            <person name="Detter J.C."/>
            <person name="Glavina T."/>
            <person name="Hammon N."/>
            <person name="Israni S."/>
            <person name="Pitluck S."/>
            <person name="Chain P."/>
            <person name="Malfatti S."/>
            <person name="Shin M."/>
            <person name="Vergez L."/>
            <person name="Schmutz J."/>
            <person name="Larimer F."/>
            <person name="Land M."/>
            <person name="Hauser L."/>
            <person name="Pelletier D.A."/>
            <person name="Kyrpides N."/>
            <person name="Anderson I."/>
            <person name="Oda Y."/>
            <person name="Harwood C.S."/>
            <person name="Richardson P."/>
        </authorList>
    </citation>
    <scope>NUCLEOTIDE SEQUENCE [LARGE SCALE GENOMIC DNA]</scope>
    <source>
        <strain>HaA2</strain>
    </source>
</reference>
<evidence type="ECO:0000255" key="1">
    <source>
        <dbReference type="HAMAP-Rule" id="MF_00121"/>
    </source>
</evidence>
<comment type="function">
    <text evidence="1">Allows the formation of correctly charged Asn-tRNA(Asn) or Gln-tRNA(Gln) through the transamidation of misacylated Asp-tRNA(Asn) or Glu-tRNA(Gln) in organisms which lack either or both of asparaginyl-tRNA or glutaminyl-tRNA synthetases. The reaction takes place in the presence of glutamine and ATP through an activated phospho-Asp-tRNA(Asn) or phospho-Glu-tRNA(Gln).</text>
</comment>
<comment type="catalytic activity">
    <reaction evidence="1">
        <text>L-glutamyl-tRNA(Gln) + L-glutamine + ATP + H2O = L-glutaminyl-tRNA(Gln) + L-glutamate + ADP + phosphate + H(+)</text>
        <dbReference type="Rhea" id="RHEA:17521"/>
        <dbReference type="Rhea" id="RHEA-COMP:9681"/>
        <dbReference type="Rhea" id="RHEA-COMP:9684"/>
        <dbReference type="ChEBI" id="CHEBI:15377"/>
        <dbReference type="ChEBI" id="CHEBI:15378"/>
        <dbReference type="ChEBI" id="CHEBI:29985"/>
        <dbReference type="ChEBI" id="CHEBI:30616"/>
        <dbReference type="ChEBI" id="CHEBI:43474"/>
        <dbReference type="ChEBI" id="CHEBI:58359"/>
        <dbReference type="ChEBI" id="CHEBI:78520"/>
        <dbReference type="ChEBI" id="CHEBI:78521"/>
        <dbReference type="ChEBI" id="CHEBI:456216"/>
    </reaction>
</comment>
<comment type="catalytic activity">
    <reaction evidence="1">
        <text>L-aspartyl-tRNA(Asn) + L-glutamine + ATP + H2O = L-asparaginyl-tRNA(Asn) + L-glutamate + ADP + phosphate + 2 H(+)</text>
        <dbReference type="Rhea" id="RHEA:14513"/>
        <dbReference type="Rhea" id="RHEA-COMP:9674"/>
        <dbReference type="Rhea" id="RHEA-COMP:9677"/>
        <dbReference type="ChEBI" id="CHEBI:15377"/>
        <dbReference type="ChEBI" id="CHEBI:15378"/>
        <dbReference type="ChEBI" id="CHEBI:29985"/>
        <dbReference type="ChEBI" id="CHEBI:30616"/>
        <dbReference type="ChEBI" id="CHEBI:43474"/>
        <dbReference type="ChEBI" id="CHEBI:58359"/>
        <dbReference type="ChEBI" id="CHEBI:78515"/>
        <dbReference type="ChEBI" id="CHEBI:78516"/>
        <dbReference type="ChEBI" id="CHEBI:456216"/>
    </reaction>
</comment>
<comment type="subunit">
    <text evidence="1">Heterotrimer of A, B and C subunits.</text>
</comment>
<comment type="similarity">
    <text evidence="1">Belongs to the GatB/GatE family. GatB subfamily.</text>
</comment>
<sequence>MNAPVKPSQLIKGATGDWEVVIGLEIHAQVSSNAKLFSGAATEFGGDPNSHVSLVDAAMPGMLPVINEECVKQAIRSGLGLNAQINLRSVFDRKNYFYPDLPQGYQISQYKSPIVGEGEVVVDLPDGDSTTVGIERLHLEQDAGKLLHDQDPTSTFVDLNRSGVALMEIVSKPDLRSSEQAKAYVSKLRTILRYLGTCDGDMEKGSLRADVNVSVRKPGEPYGTRCEIKNVNSIRFIGQAIEYEARRQIGVLEDGGAIVQETRLFDAGKGETRSMRSKEEAHDYRYFPDPDLLPLEFSQAYVDELKAGLPELPDQKKARFIGSFGLSPDDAGVLVSERESADFYEAVLAALADAARDGKLAANWVINELFGRLNKDGQSIEVSPVSAAQLAAIVDLIGEGTISGKIAKELFEIVWTEGGDPRVLVEARGMKQVTDLSAIEKVVDEIIAGNPDKVAQAIAKPAMLGWFVGQVMKSSGGKANPQAVNDLLKRKLGL</sequence>
<organism>
    <name type="scientific">Rhodopseudomonas palustris (strain HaA2)</name>
    <dbReference type="NCBI Taxonomy" id="316058"/>
    <lineage>
        <taxon>Bacteria</taxon>
        <taxon>Pseudomonadati</taxon>
        <taxon>Pseudomonadota</taxon>
        <taxon>Alphaproteobacteria</taxon>
        <taxon>Hyphomicrobiales</taxon>
        <taxon>Nitrobacteraceae</taxon>
        <taxon>Rhodopseudomonas</taxon>
    </lineage>
</organism>
<accession>Q2IXB5</accession>
<proteinExistence type="inferred from homology"/>
<gene>
    <name evidence="1" type="primary">gatB</name>
    <name type="ordered locus">RPB_2440</name>
</gene>
<protein>
    <recommendedName>
        <fullName evidence="1">Aspartyl/glutamyl-tRNA(Asn/Gln) amidotransferase subunit B</fullName>
        <shortName evidence="1">Asp/Glu-ADT subunit B</shortName>
        <ecNumber evidence="1">6.3.5.-</ecNumber>
    </recommendedName>
</protein>
<name>GATB_RHOP2</name>
<dbReference type="EC" id="6.3.5.-" evidence="1"/>
<dbReference type="EMBL" id="CP000250">
    <property type="protein sequence ID" value="ABD07145.1"/>
    <property type="molecule type" value="Genomic_DNA"/>
</dbReference>
<dbReference type="RefSeq" id="WP_011441330.1">
    <property type="nucleotide sequence ID" value="NC_007778.1"/>
</dbReference>
<dbReference type="SMR" id="Q2IXB5"/>
<dbReference type="STRING" id="316058.RPB_2440"/>
<dbReference type="KEGG" id="rpb:RPB_2440"/>
<dbReference type="eggNOG" id="COG0064">
    <property type="taxonomic scope" value="Bacteria"/>
</dbReference>
<dbReference type="HOGENOM" id="CLU_019240_0_0_5"/>
<dbReference type="OrthoDB" id="9804078at2"/>
<dbReference type="Proteomes" id="UP000008809">
    <property type="component" value="Chromosome"/>
</dbReference>
<dbReference type="GO" id="GO:0050566">
    <property type="term" value="F:asparaginyl-tRNA synthase (glutamine-hydrolyzing) activity"/>
    <property type="evidence" value="ECO:0007669"/>
    <property type="project" value="RHEA"/>
</dbReference>
<dbReference type="GO" id="GO:0005524">
    <property type="term" value="F:ATP binding"/>
    <property type="evidence" value="ECO:0007669"/>
    <property type="project" value="UniProtKB-KW"/>
</dbReference>
<dbReference type="GO" id="GO:0050567">
    <property type="term" value="F:glutaminyl-tRNA synthase (glutamine-hydrolyzing) activity"/>
    <property type="evidence" value="ECO:0007669"/>
    <property type="project" value="UniProtKB-UniRule"/>
</dbReference>
<dbReference type="GO" id="GO:0070681">
    <property type="term" value="P:glutaminyl-tRNAGln biosynthesis via transamidation"/>
    <property type="evidence" value="ECO:0007669"/>
    <property type="project" value="TreeGrafter"/>
</dbReference>
<dbReference type="GO" id="GO:0006412">
    <property type="term" value="P:translation"/>
    <property type="evidence" value="ECO:0007669"/>
    <property type="project" value="UniProtKB-UniRule"/>
</dbReference>
<dbReference type="FunFam" id="1.10.10.410:FF:000001">
    <property type="entry name" value="Aspartyl/glutamyl-tRNA(Asn/Gln) amidotransferase subunit B"/>
    <property type="match status" value="1"/>
</dbReference>
<dbReference type="FunFam" id="1.10.150.380:FF:000001">
    <property type="entry name" value="Aspartyl/glutamyl-tRNA(Asn/Gln) amidotransferase subunit B"/>
    <property type="match status" value="1"/>
</dbReference>
<dbReference type="Gene3D" id="1.10.10.410">
    <property type="match status" value="1"/>
</dbReference>
<dbReference type="Gene3D" id="1.10.150.380">
    <property type="entry name" value="GatB domain, N-terminal subdomain"/>
    <property type="match status" value="1"/>
</dbReference>
<dbReference type="HAMAP" id="MF_00121">
    <property type="entry name" value="GatB"/>
    <property type="match status" value="1"/>
</dbReference>
<dbReference type="InterPro" id="IPR017959">
    <property type="entry name" value="Asn/Gln-tRNA_amidoTrfase_suB/E"/>
</dbReference>
<dbReference type="InterPro" id="IPR006075">
    <property type="entry name" value="Asn/Gln-tRNA_Trfase_suB/E_cat"/>
</dbReference>
<dbReference type="InterPro" id="IPR018027">
    <property type="entry name" value="Asn/Gln_amidotransferase"/>
</dbReference>
<dbReference type="InterPro" id="IPR003789">
    <property type="entry name" value="Asn/Gln_tRNA_amidoTrase-B-like"/>
</dbReference>
<dbReference type="InterPro" id="IPR004413">
    <property type="entry name" value="GatB"/>
</dbReference>
<dbReference type="InterPro" id="IPR042114">
    <property type="entry name" value="GatB_C_1"/>
</dbReference>
<dbReference type="InterPro" id="IPR023168">
    <property type="entry name" value="GatB_Yqey_C_2"/>
</dbReference>
<dbReference type="InterPro" id="IPR017958">
    <property type="entry name" value="Gln-tRNA_amidoTrfase_suB_CS"/>
</dbReference>
<dbReference type="InterPro" id="IPR014746">
    <property type="entry name" value="Gln_synth/guanido_kin_cat_dom"/>
</dbReference>
<dbReference type="NCBIfam" id="TIGR00133">
    <property type="entry name" value="gatB"/>
    <property type="match status" value="1"/>
</dbReference>
<dbReference type="NCBIfam" id="NF004012">
    <property type="entry name" value="PRK05477.1-2"/>
    <property type="match status" value="1"/>
</dbReference>
<dbReference type="NCBIfam" id="NF004014">
    <property type="entry name" value="PRK05477.1-4"/>
    <property type="match status" value="1"/>
</dbReference>
<dbReference type="NCBIfam" id="NF004015">
    <property type="entry name" value="PRK05477.1-5"/>
    <property type="match status" value="1"/>
</dbReference>
<dbReference type="PANTHER" id="PTHR11659">
    <property type="entry name" value="GLUTAMYL-TRNA GLN AMIDOTRANSFERASE SUBUNIT B MITOCHONDRIAL AND PROKARYOTIC PET112-RELATED"/>
    <property type="match status" value="1"/>
</dbReference>
<dbReference type="PANTHER" id="PTHR11659:SF0">
    <property type="entry name" value="GLUTAMYL-TRNA(GLN) AMIDOTRANSFERASE SUBUNIT B, MITOCHONDRIAL"/>
    <property type="match status" value="1"/>
</dbReference>
<dbReference type="Pfam" id="PF02934">
    <property type="entry name" value="GatB_N"/>
    <property type="match status" value="1"/>
</dbReference>
<dbReference type="Pfam" id="PF02637">
    <property type="entry name" value="GatB_Yqey"/>
    <property type="match status" value="1"/>
</dbReference>
<dbReference type="SMART" id="SM00845">
    <property type="entry name" value="GatB_Yqey"/>
    <property type="match status" value="1"/>
</dbReference>
<dbReference type="SUPFAM" id="SSF89095">
    <property type="entry name" value="GatB/YqeY motif"/>
    <property type="match status" value="1"/>
</dbReference>
<dbReference type="SUPFAM" id="SSF55931">
    <property type="entry name" value="Glutamine synthetase/guanido kinase"/>
    <property type="match status" value="1"/>
</dbReference>
<dbReference type="PROSITE" id="PS01234">
    <property type="entry name" value="GATB"/>
    <property type="match status" value="1"/>
</dbReference>
<keyword id="KW-0067">ATP-binding</keyword>
<keyword id="KW-0436">Ligase</keyword>
<keyword id="KW-0547">Nucleotide-binding</keyword>
<keyword id="KW-0648">Protein biosynthesis</keyword>
<keyword id="KW-1185">Reference proteome</keyword>